<reference key="1">
    <citation type="journal article" date="2003" name="Nature">
        <title>Genome sequence of Bacillus cereus and comparative analysis with Bacillus anthracis.</title>
        <authorList>
            <person name="Ivanova N."/>
            <person name="Sorokin A."/>
            <person name="Anderson I."/>
            <person name="Galleron N."/>
            <person name="Candelon B."/>
            <person name="Kapatral V."/>
            <person name="Bhattacharyya A."/>
            <person name="Reznik G."/>
            <person name="Mikhailova N."/>
            <person name="Lapidus A."/>
            <person name="Chu L."/>
            <person name="Mazur M."/>
            <person name="Goltsman E."/>
            <person name="Larsen N."/>
            <person name="D'Souza M."/>
            <person name="Walunas T."/>
            <person name="Grechkin Y."/>
            <person name="Pusch G."/>
            <person name="Haselkorn R."/>
            <person name="Fonstein M."/>
            <person name="Ehrlich S.D."/>
            <person name="Overbeek R."/>
            <person name="Kyrpides N.C."/>
        </authorList>
    </citation>
    <scope>NUCLEOTIDE SEQUENCE [LARGE SCALE GENOMIC DNA]</scope>
    <source>
        <strain>ATCC 14579 / DSM 31 / CCUG 7414 / JCM 2152 / NBRC 15305 / NCIMB 9373 / NCTC 2599 / NRRL B-3711</strain>
    </source>
</reference>
<accession>Q819C8</accession>
<dbReference type="EMBL" id="AE016877">
    <property type="protein sequence ID" value="AAP10976.1"/>
    <property type="molecule type" value="Genomic_DNA"/>
</dbReference>
<dbReference type="RefSeq" id="NP_833775.1">
    <property type="nucleotide sequence ID" value="NC_004722.1"/>
</dbReference>
<dbReference type="RefSeq" id="WP_000375167.1">
    <property type="nucleotide sequence ID" value="NC_004722.1"/>
</dbReference>
<dbReference type="SMR" id="Q819C8"/>
<dbReference type="STRING" id="226900.BC_4057"/>
<dbReference type="KEGG" id="bce:BC4057"/>
<dbReference type="PATRIC" id="fig|226900.8.peg.4188"/>
<dbReference type="HOGENOM" id="CLU_045647_5_3_9"/>
<dbReference type="Proteomes" id="UP000001417">
    <property type="component" value="Chromosome"/>
</dbReference>
<dbReference type="GO" id="GO:0005737">
    <property type="term" value="C:cytoplasm"/>
    <property type="evidence" value="ECO:0007669"/>
    <property type="project" value="UniProtKB-SubCell"/>
</dbReference>
<dbReference type="GO" id="GO:0051301">
    <property type="term" value="P:cell division"/>
    <property type="evidence" value="ECO:0007669"/>
    <property type="project" value="UniProtKB-KW"/>
</dbReference>
<dbReference type="GO" id="GO:0051304">
    <property type="term" value="P:chromosome separation"/>
    <property type="evidence" value="ECO:0007669"/>
    <property type="project" value="InterPro"/>
</dbReference>
<dbReference type="GO" id="GO:0006260">
    <property type="term" value="P:DNA replication"/>
    <property type="evidence" value="ECO:0007669"/>
    <property type="project" value="UniProtKB-UniRule"/>
</dbReference>
<dbReference type="Gene3D" id="1.10.10.10">
    <property type="entry name" value="Winged helix-like DNA-binding domain superfamily/Winged helix DNA-binding domain"/>
    <property type="match status" value="2"/>
</dbReference>
<dbReference type="HAMAP" id="MF_01804">
    <property type="entry name" value="ScpB"/>
    <property type="match status" value="1"/>
</dbReference>
<dbReference type="InterPro" id="IPR005234">
    <property type="entry name" value="ScpB_csome_segregation"/>
</dbReference>
<dbReference type="InterPro" id="IPR036388">
    <property type="entry name" value="WH-like_DNA-bd_sf"/>
</dbReference>
<dbReference type="InterPro" id="IPR036390">
    <property type="entry name" value="WH_DNA-bd_sf"/>
</dbReference>
<dbReference type="NCBIfam" id="TIGR00281">
    <property type="entry name" value="SMC-Scp complex subunit ScpB"/>
    <property type="match status" value="1"/>
</dbReference>
<dbReference type="PANTHER" id="PTHR34298">
    <property type="entry name" value="SEGREGATION AND CONDENSATION PROTEIN B"/>
    <property type="match status" value="1"/>
</dbReference>
<dbReference type="PANTHER" id="PTHR34298:SF2">
    <property type="entry name" value="SEGREGATION AND CONDENSATION PROTEIN B"/>
    <property type="match status" value="1"/>
</dbReference>
<dbReference type="Pfam" id="PF04079">
    <property type="entry name" value="SMC_ScpB"/>
    <property type="match status" value="1"/>
</dbReference>
<dbReference type="PIRSF" id="PIRSF019345">
    <property type="entry name" value="ScpB"/>
    <property type="match status" value="1"/>
</dbReference>
<dbReference type="SUPFAM" id="SSF46785">
    <property type="entry name" value="Winged helix' DNA-binding domain"/>
    <property type="match status" value="2"/>
</dbReference>
<keyword id="KW-0131">Cell cycle</keyword>
<keyword id="KW-0132">Cell division</keyword>
<keyword id="KW-0159">Chromosome partition</keyword>
<keyword id="KW-0963">Cytoplasm</keyword>
<keyword id="KW-1185">Reference proteome</keyword>
<evidence type="ECO:0000255" key="1">
    <source>
        <dbReference type="HAMAP-Rule" id="MF_01804"/>
    </source>
</evidence>
<sequence length="190" mass="21562">MDRKEQKSIIEGLLFVSGDEGIYPEQIAKVLEIEMNEAINILEEMQQECEGANRGLQIVQYAKVYRFATKKEHASYYQKLIDTPTAASLSQAALETLAIVAYRQPITRTEMEEIRGVKTDKALQTLVSHLLIKEMGRAEGPGRPILYGTTKEFLDTFGLKTLDDLPPLSEENEQMNEADLFFGCLQEIWK</sequence>
<gene>
    <name evidence="1" type="primary">scpB</name>
    <name type="ordered locus">BC_4057</name>
</gene>
<protein>
    <recommendedName>
        <fullName evidence="1">Segregation and condensation protein B</fullName>
    </recommendedName>
</protein>
<feature type="chain" id="PRO_0000211124" description="Segregation and condensation protein B">
    <location>
        <begin position="1"/>
        <end position="190"/>
    </location>
</feature>
<proteinExistence type="inferred from homology"/>
<name>SCPB_BACCR</name>
<organism>
    <name type="scientific">Bacillus cereus (strain ATCC 14579 / DSM 31 / CCUG 7414 / JCM 2152 / NBRC 15305 / NCIMB 9373 / NCTC 2599 / NRRL B-3711)</name>
    <dbReference type="NCBI Taxonomy" id="226900"/>
    <lineage>
        <taxon>Bacteria</taxon>
        <taxon>Bacillati</taxon>
        <taxon>Bacillota</taxon>
        <taxon>Bacilli</taxon>
        <taxon>Bacillales</taxon>
        <taxon>Bacillaceae</taxon>
        <taxon>Bacillus</taxon>
        <taxon>Bacillus cereus group</taxon>
    </lineage>
</organism>
<comment type="function">
    <text evidence="1">Participates in chromosomal partition during cell division. May act via the formation of a condensin-like complex containing Smc and ScpA that pull DNA away from mid-cell into both cell halves.</text>
</comment>
<comment type="subunit">
    <text evidence="1">Homodimer. Homodimerization may be required to stabilize the binding of ScpA to the Smc head domains. Component of a cohesin-like complex composed of ScpA, ScpB and the Smc homodimer, in which ScpA and ScpB bind to the head domain of Smc. The presence of the three proteins is required for the association of the complex with DNA.</text>
</comment>
<comment type="subcellular location">
    <subcellularLocation>
        <location evidence="1">Cytoplasm</location>
    </subcellularLocation>
    <text evidence="1">Associated with two foci at the outer edges of the nucleoid region in young cells, and at four foci within both cell halves in older cells.</text>
</comment>
<comment type="similarity">
    <text evidence="1">Belongs to the ScpB family.</text>
</comment>